<organism>
    <name type="scientific">Sinorhizobium fredii (strain NBRC 101917 / NGR234)</name>
    <dbReference type="NCBI Taxonomy" id="394"/>
    <lineage>
        <taxon>Bacteria</taxon>
        <taxon>Pseudomonadati</taxon>
        <taxon>Pseudomonadota</taxon>
        <taxon>Alphaproteobacteria</taxon>
        <taxon>Hyphomicrobiales</taxon>
        <taxon>Rhizobiaceae</taxon>
        <taxon>Sinorhizobium/Ensifer group</taxon>
        <taxon>Sinorhizobium</taxon>
    </lineage>
</organism>
<sequence>MTTDRTPQTPTDIYERVTSQIIAAIEAGASDYRMPWHHDGSAITTPVNVASSKAYRGVNILSLWAAAHAEGYAAGIWGTYRQWQALDAQVRKGERGHLVVFWKTTDRDAADAQHGDEDRHEPARRLFARGYTVFNCAQVDGYTPPEMPVLPEAERIERAERFCASLGIDIRHGGSQAYYRPSTDHVQMPEFACFRDAVAYYAVLLHECGHASGAKHRLDRDLSGRFGSAAYAMEECTVELLSAMICADLNLSVEARPDHARYIASWLEALRSDQRAIFTAASKAQQIADWMHAQQSDAQRNEVRGAA</sequence>
<proteinExistence type="predicted"/>
<keyword id="KW-0614">Plasmid</keyword>
<keyword id="KW-1185">Reference proteome</keyword>
<dbReference type="EMBL" id="U00090">
    <property type="protein sequence ID" value="AAB92447.1"/>
    <property type="molecule type" value="Genomic_DNA"/>
</dbReference>
<dbReference type="RefSeq" id="NP_443836.1">
    <property type="nucleotide sequence ID" value="NC_000914.2"/>
</dbReference>
<dbReference type="RefSeq" id="WP_010875402.1">
    <property type="nucleotide sequence ID" value="NC_000914.2"/>
</dbReference>
<dbReference type="SMR" id="P55426"/>
<dbReference type="KEGG" id="rhi:NGR_a03900"/>
<dbReference type="PATRIC" id="fig|394.7.peg.407"/>
<dbReference type="eggNOG" id="COG4227">
    <property type="taxonomic scope" value="Bacteria"/>
</dbReference>
<dbReference type="HOGENOM" id="CLU_041111_0_0_5"/>
<dbReference type="OrthoDB" id="9792687at2"/>
<dbReference type="Proteomes" id="UP000001054">
    <property type="component" value="Plasmid pNGR234a"/>
</dbReference>
<dbReference type="GO" id="GO:0003697">
    <property type="term" value="F:single-stranded DNA binding"/>
    <property type="evidence" value="ECO:0007669"/>
    <property type="project" value="InterPro"/>
</dbReference>
<dbReference type="InterPro" id="IPR017113">
    <property type="entry name" value="Antirestriction_ArdC"/>
</dbReference>
<dbReference type="InterPro" id="IPR013610">
    <property type="entry name" value="ArdC_N"/>
</dbReference>
<dbReference type="InterPro" id="IPR041459">
    <property type="entry name" value="MPTase-PolyVal"/>
</dbReference>
<dbReference type="Pfam" id="PF08401">
    <property type="entry name" value="ArdcN"/>
    <property type="match status" value="1"/>
</dbReference>
<dbReference type="Pfam" id="PF18818">
    <property type="entry name" value="MPTase-PolyVal"/>
    <property type="match status" value="1"/>
</dbReference>
<dbReference type="PIRSF" id="PIRSF037112">
    <property type="entry name" value="Antirestriction_ArdC"/>
    <property type="match status" value="1"/>
</dbReference>
<feature type="chain" id="PRO_0000200829" description="Uncharacterized protein y4eC">
    <location>
        <begin position="1"/>
        <end position="307"/>
    </location>
</feature>
<protein>
    <recommendedName>
        <fullName>Uncharacterized protein y4eC</fullName>
    </recommendedName>
</protein>
<gene>
    <name type="ordered locus">NGR_a03900</name>
    <name type="ORF">y4eC</name>
</gene>
<geneLocation type="plasmid">
    <name>sym pNGR234a</name>
</geneLocation>
<name>Y4EC_SINFN</name>
<reference key="1">
    <citation type="journal article" date="1997" name="Nature">
        <title>Molecular basis of symbiosis between Rhizobium and legumes.</title>
        <authorList>
            <person name="Freiberg C.A."/>
            <person name="Fellay R."/>
            <person name="Bairoch A."/>
            <person name="Broughton W.J."/>
            <person name="Rosenthal A."/>
            <person name="Perret X."/>
        </authorList>
    </citation>
    <scope>NUCLEOTIDE SEQUENCE [LARGE SCALE GENOMIC DNA]</scope>
    <source>
        <strain>NBRC 101917 / NGR234</strain>
    </source>
</reference>
<reference key="2">
    <citation type="journal article" date="2009" name="Appl. Environ. Microbiol.">
        <title>Rhizobium sp. strain NGR234 possesses a remarkable number of secretion systems.</title>
        <authorList>
            <person name="Schmeisser C."/>
            <person name="Liesegang H."/>
            <person name="Krysciak D."/>
            <person name="Bakkou N."/>
            <person name="Le Quere A."/>
            <person name="Wollherr A."/>
            <person name="Heinemeyer I."/>
            <person name="Morgenstern B."/>
            <person name="Pommerening-Roeser A."/>
            <person name="Flores M."/>
            <person name="Palacios R."/>
            <person name="Brenner S."/>
            <person name="Gottschalk G."/>
            <person name="Schmitz R.A."/>
            <person name="Broughton W.J."/>
            <person name="Perret X."/>
            <person name="Strittmatter A.W."/>
            <person name="Streit W.R."/>
        </authorList>
    </citation>
    <scope>NUCLEOTIDE SEQUENCE [LARGE SCALE GENOMIC DNA]</scope>
    <source>
        <strain>NBRC 101917 / NGR234</strain>
    </source>
</reference>
<accession>P55426</accession>